<reference key="1">
    <citation type="journal article" date="2002" name="Mol. Microbiol.">
        <title>Genome sequence of Streptococcus agalactiae, a pathogen causing invasive neonatal disease.</title>
        <authorList>
            <person name="Glaser P."/>
            <person name="Rusniok C."/>
            <person name="Buchrieser C."/>
            <person name="Chevalier F."/>
            <person name="Frangeul L."/>
            <person name="Msadek T."/>
            <person name="Zouine M."/>
            <person name="Couve E."/>
            <person name="Lalioui L."/>
            <person name="Poyart C."/>
            <person name="Trieu-Cuot P."/>
            <person name="Kunst F."/>
        </authorList>
    </citation>
    <scope>NUCLEOTIDE SEQUENCE [LARGE SCALE GENOMIC DNA]</scope>
    <source>
        <strain>NEM316</strain>
    </source>
</reference>
<organism>
    <name type="scientific">Streptococcus agalactiae serotype III (strain NEM316)</name>
    <dbReference type="NCBI Taxonomy" id="211110"/>
    <lineage>
        <taxon>Bacteria</taxon>
        <taxon>Bacillati</taxon>
        <taxon>Bacillota</taxon>
        <taxon>Bacilli</taxon>
        <taxon>Lactobacillales</taxon>
        <taxon>Streptococcaceae</taxon>
        <taxon>Streptococcus</taxon>
    </lineage>
</organism>
<comment type="similarity">
    <text evidence="1">Belongs to the bacterial ribosomal protein bL32 family.</text>
</comment>
<protein>
    <recommendedName>
        <fullName evidence="1">Large ribosomal subunit protein bL32</fullName>
    </recommendedName>
    <alternativeName>
        <fullName evidence="3">50S ribosomal protein L32</fullName>
    </alternativeName>
</protein>
<dbReference type="EMBL" id="AL766856">
    <property type="protein sequence ID" value="CAD47721.1"/>
    <property type="molecule type" value="Genomic_DNA"/>
</dbReference>
<dbReference type="RefSeq" id="WP_000290414.1">
    <property type="nucleotide sequence ID" value="NC_004368.1"/>
</dbReference>
<dbReference type="SMR" id="P66214"/>
<dbReference type="GeneID" id="83689722"/>
<dbReference type="KEGG" id="san:rpmF"/>
<dbReference type="eggNOG" id="COG0333">
    <property type="taxonomic scope" value="Bacteria"/>
</dbReference>
<dbReference type="HOGENOM" id="CLU_129084_2_3_9"/>
<dbReference type="Proteomes" id="UP000000823">
    <property type="component" value="Chromosome"/>
</dbReference>
<dbReference type="GO" id="GO:0015934">
    <property type="term" value="C:large ribosomal subunit"/>
    <property type="evidence" value="ECO:0007669"/>
    <property type="project" value="InterPro"/>
</dbReference>
<dbReference type="GO" id="GO:0003735">
    <property type="term" value="F:structural constituent of ribosome"/>
    <property type="evidence" value="ECO:0007669"/>
    <property type="project" value="InterPro"/>
</dbReference>
<dbReference type="GO" id="GO:0006412">
    <property type="term" value="P:translation"/>
    <property type="evidence" value="ECO:0007669"/>
    <property type="project" value="UniProtKB-UniRule"/>
</dbReference>
<dbReference type="HAMAP" id="MF_00340">
    <property type="entry name" value="Ribosomal_bL32"/>
    <property type="match status" value="1"/>
</dbReference>
<dbReference type="InterPro" id="IPR002677">
    <property type="entry name" value="Ribosomal_bL32"/>
</dbReference>
<dbReference type="InterPro" id="IPR044957">
    <property type="entry name" value="Ribosomal_bL32_bact"/>
</dbReference>
<dbReference type="InterPro" id="IPR011332">
    <property type="entry name" value="Ribosomal_zn-bd"/>
</dbReference>
<dbReference type="NCBIfam" id="TIGR01031">
    <property type="entry name" value="rpmF_bact"/>
    <property type="match status" value="1"/>
</dbReference>
<dbReference type="PANTHER" id="PTHR35534">
    <property type="entry name" value="50S RIBOSOMAL PROTEIN L32"/>
    <property type="match status" value="1"/>
</dbReference>
<dbReference type="PANTHER" id="PTHR35534:SF1">
    <property type="entry name" value="LARGE RIBOSOMAL SUBUNIT PROTEIN BL32"/>
    <property type="match status" value="1"/>
</dbReference>
<dbReference type="Pfam" id="PF01783">
    <property type="entry name" value="Ribosomal_L32p"/>
    <property type="match status" value="1"/>
</dbReference>
<dbReference type="SUPFAM" id="SSF57829">
    <property type="entry name" value="Zn-binding ribosomal proteins"/>
    <property type="match status" value="1"/>
</dbReference>
<keyword id="KW-0687">Ribonucleoprotein</keyword>
<keyword id="KW-0689">Ribosomal protein</keyword>
<evidence type="ECO:0000255" key="1">
    <source>
        <dbReference type="HAMAP-Rule" id="MF_00340"/>
    </source>
</evidence>
<evidence type="ECO:0000256" key="2">
    <source>
        <dbReference type="SAM" id="MobiDB-lite"/>
    </source>
</evidence>
<evidence type="ECO:0000305" key="3"/>
<accession>P66214</accession>
<accession>Q8NZ17</accession>
<name>RL32_STRA3</name>
<gene>
    <name evidence="1" type="primary">rpmF</name>
    <name type="ordered locus">gbs2062</name>
</gene>
<feature type="chain" id="PRO_0000172421" description="Large ribosomal subunit protein bL32">
    <location>
        <begin position="1"/>
        <end position="60"/>
    </location>
</feature>
<feature type="region of interest" description="Disordered" evidence="2">
    <location>
        <begin position="1"/>
        <end position="22"/>
    </location>
</feature>
<feature type="compositionally biased region" description="Basic residues" evidence="2">
    <location>
        <begin position="7"/>
        <end position="20"/>
    </location>
</feature>
<sequence length="60" mass="6865">MAVPARHTSKAKKNKRRTHYKLTAPSVQFDETTGDYSRSHRVSLKGYYKGRKIAKANEAK</sequence>
<proteinExistence type="inferred from homology"/>